<name>RS8_ERWT9</name>
<keyword id="KW-1185">Reference proteome</keyword>
<keyword id="KW-0687">Ribonucleoprotein</keyword>
<keyword id="KW-0689">Ribosomal protein</keyword>
<keyword id="KW-0694">RNA-binding</keyword>
<keyword id="KW-0699">rRNA-binding</keyword>
<protein>
    <recommendedName>
        <fullName evidence="1">Small ribosomal subunit protein uS8</fullName>
    </recommendedName>
    <alternativeName>
        <fullName evidence="2">30S ribosomal protein S8</fullName>
    </alternativeName>
</protein>
<feature type="chain" id="PRO_1000140555" description="Small ribosomal subunit protein uS8">
    <location>
        <begin position="1"/>
        <end position="130"/>
    </location>
</feature>
<comment type="function">
    <text evidence="1">One of the primary rRNA binding proteins, it binds directly to 16S rRNA central domain where it helps coordinate assembly of the platform of the 30S subunit.</text>
</comment>
<comment type="subunit">
    <text evidence="1">Part of the 30S ribosomal subunit. Contacts proteins S5 and S12.</text>
</comment>
<comment type="similarity">
    <text evidence="1">Belongs to the universal ribosomal protein uS8 family.</text>
</comment>
<dbReference type="EMBL" id="CU468135">
    <property type="protein sequence ID" value="CAO98195.1"/>
    <property type="molecule type" value="Genomic_DNA"/>
</dbReference>
<dbReference type="RefSeq" id="WP_012442838.1">
    <property type="nucleotide sequence ID" value="NC_010694.1"/>
</dbReference>
<dbReference type="SMR" id="B2VK82"/>
<dbReference type="STRING" id="465817.ETA_31490"/>
<dbReference type="KEGG" id="eta:ETA_31490"/>
<dbReference type="eggNOG" id="COG0096">
    <property type="taxonomic scope" value="Bacteria"/>
</dbReference>
<dbReference type="HOGENOM" id="CLU_098428_0_0_6"/>
<dbReference type="OrthoDB" id="9802617at2"/>
<dbReference type="Proteomes" id="UP000001726">
    <property type="component" value="Chromosome"/>
</dbReference>
<dbReference type="GO" id="GO:1990904">
    <property type="term" value="C:ribonucleoprotein complex"/>
    <property type="evidence" value="ECO:0007669"/>
    <property type="project" value="UniProtKB-KW"/>
</dbReference>
<dbReference type="GO" id="GO:0005840">
    <property type="term" value="C:ribosome"/>
    <property type="evidence" value="ECO:0007669"/>
    <property type="project" value="UniProtKB-KW"/>
</dbReference>
<dbReference type="GO" id="GO:0019843">
    <property type="term" value="F:rRNA binding"/>
    <property type="evidence" value="ECO:0007669"/>
    <property type="project" value="UniProtKB-UniRule"/>
</dbReference>
<dbReference type="GO" id="GO:0003735">
    <property type="term" value="F:structural constituent of ribosome"/>
    <property type="evidence" value="ECO:0007669"/>
    <property type="project" value="InterPro"/>
</dbReference>
<dbReference type="GO" id="GO:0006412">
    <property type="term" value="P:translation"/>
    <property type="evidence" value="ECO:0007669"/>
    <property type="project" value="UniProtKB-UniRule"/>
</dbReference>
<dbReference type="FunFam" id="3.30.1370.30:FF:000003">
    <property type="entry name" value="30S ribosomal protein S8"/>
    <property type="match status" value="1"/>
</dbReference>
<dbReference type="FunFam" id="3.30.1490.10:FF:000001">
    <property type="entry name" value="30S ribosomal protein S8"/>
    <property type="match status" value="1"/>
</dbReference>
<dbReference type="Gene3D" id="3.30.1370.30">
    <property type="match status" value="1"/>
</dbReference>
<dbReference type="Gene3D" id="3.30.1490.10">
    <property type="match status" value="1"/>
</dbReference>
<dbReference type="HAMAP" id="MF_01302_B">
    <property type="entry name" value="Ribosomal_uS8_B"/>
    <property type="match status" value="1"/>
</dbReference>
<dbReference type="InterPro" id="IPR000630">
    <property type="entry name" value="Ribosomal_uS8"/>
</dbReference>
<dbReference type="InterPro" id="IPR047863">
    <property type="entry name" value="Ribosomal_uS8_CS"/>
</dbReference>
<dbReference type="InterPro" id="IPR035987">
    <property type="entry name" value="Ribosomal_uS8_sf"/>
</dbReference>
<dbReference type="NCBIfam" id="NF001109">
    <property type="entry name" value="PRK00136.1"/>
    <property type="match status" value="1"/>
</dbReference>
<dbReference type="PANTHER" id="PTHR11758">
    <property type="entry name" value="40S RIBOSOMAL PROTEIN S15A"/>
    <property type="match status" value="1"/>
</dbReference>
<dbReference type="Pfam" id="PF00410">
    <property type="entry name" value="Ribosomal_S8"/>
    <property type="match status" value="1"/>
</dbReference>
<dbReference type="SUPFAM" id="SSF56047">
    <property type="entry name" value="Ribosomal protein S8"/>
    <property type="match status" value="1"/>
</dbReference>
<dbReference type="PROSITE" id="PS00053">
    <property type="entry name" value="RIBOSOMAL_S8"/>
    <property type="match status" value="1"/>
</dbReference>
<proteinExistence type="inferred from homology"/>
<gene>
    <name evidence="1" type="primary">rpsH</name>
    <name type="ordered locus">ETA_31490</name>
</gene>
<accession>B2VK82</accession>
<reference key="1">
    <citation type="journal article" date="2008" name="Environ. Microbiol.">
        <title>The genome of Erwinia tasmaniensis strain Et1/99, a non-pathogenic bacterium in the genus Erwinia.</title>
        <authorList>
            <person name="Kube M."/>
            <person name="Migdoll A.M."/>
            <person name="Mueller I."/>
            <person name="Kuhl H."/>
            <person name="Beck A."/>
            <person name="Reinhardt R."/>
            <person name="Geider K."/>
        </authorList>
    </citation>
    <scope>NUCLEOTIDE SEQUENCE [LARGE SCALE GENOMIC DNA]</scope>
    <source>
        <strain>DSM 17950 / CFBP 7177 / CIP 109463 / NCPPB 4357 / Et1/99</strain>
    </source>
</reference>
<evidence type="ECO:0000255" key="1">
    <source>
        <dbReference type="HAMAP-Rule" id="MF_01302"/>
    </source>
</evidence>
<evidence type="ECO:0000305" key="2"/>
<sequence>MSMQDPIADMLTRIRNGQSANKVAVTMPSSKLKLAIANVLKEEGYIEEFKIEGDTKPELELTLKYFQGKAVVESIQRVSRPGLRIYKRKDELPKVMAGLGIAVVSTSKGVMTDRAARQAGLGGEIICYVA</sequence>
<organism>
    <name type="scientific">Erwinia tasmaniensis (strain DSM 17950 / CFBP 7177 / CIP 109463 / NCPPB 4357 / Et1/99)</name>
    <dbReference type="NCBI Taxonomy" id="465817"/>
    <lineage>
        <taxon>Bacteria</taxon>
        <taxon>Pseudomonadati</taxon>
        <taxon>Pseudomonadota</taxon>
        <taxon>Gammaproteobacteria</taxon>
        <taxon>Enterobacterales</taxon>
        <taxon>Erwiniaceae</taxon>
        <taxon>Erwinia</taxon>
    </lineage>
</organism>